<feature type="initiator methionine" description="Removed" evidence="1">
    <location>
        <position position="1"/>
    </location>
</feature>
<feature type="chain" id="PRO_0000168450" description="L-lactate dehydrogenase A chain">
    <location>
        <begin position="2"/>
        <end position="331"/>
    </location>
</feature>
<feature type="active site" description="Proton acceptor" evidence="1">
    <location>
        <position position="192"/>
    </location>
</feature>
<feature type="binding site" evidence="1">
    <location>
        <begin position="29"/>
        <end position="57"/>
    </location>
    <ligand>
        <name>NAD(+)</name>
        <dbReference type="ChEBI" id="CHEBI:57540"/>
    </ligand>
</feature>
<feature type="binding site" evidence="1">
    <location>
        <position position="98"/>
    </location>
    <ligand>
        <name>NAD(+)</name>
        <dbReference type="ChEBI" id="CHEBI:57540"/>
    </ligand>
</feature>
<feature type="binding site" evidence="1">
    <location>
        <position position="105"/>
    </location>
    <ligand>
        <name>substrate</name>
    </ligand>
</feature>
<feature type="binding site" evidence="1">
    <location>
        <position position="137"/>
    </location>
    <ligand>
        <name>NAD(+)</name>
        <dbReference type="ChEBI" id="CHEBI:57540"/>
    </ligand>
</feature>
<feature type="binding site" evidence="1">
    <location>
        <position position="137"/>
    </location>
    <ligand>
        <name>substrate</name>
    </ligand>
</feature>
<feature type="binding site" evidence="1">
    <location>
        <position position="168"/>
    </location>
    <ligand>
        <name>substrate</name>
    </ligand>
</feature>
<feature type="binding site" evidence="1">
    <location>
        <position position="247"/>
    </location>
    <ligand>
        <name>substrate</name>
    </ligand>
</feature>
<comment type="function">
    <text evidence="2">Interconverts simultaneously and stereospecifically pyruvate and lactate with concomitant interconversion of NADH and NAD(+).</text>
</comment>
<comment type="catalytic activity">
    <reaction evidence="2">
        <text>(S)-lactate + NAD(+) = pyruvate + NADH + H(+)</text>
        <dbReference type="Rhea" id="RHEA:23444"/>
        <dbReference type="ChEBI" id="CHEBI:15361"/>
        <dbReference type="ChEBI" id="CHEBI:15378"/>
        <dbReference type="ChEBI" id="CHEBI:16651"/>
        <dbReference type="ChEBI" id="CHEBI:57540"/>
        <dbReference type="ChEBI" id="CHEBI:57945"/>
        <dbReference type="EC" id="1.1.1.27"/>
    </reaction>
    <physiologicalReaction direction="left-to-right" evidence="2">
        <dbReference type="Rhea" id="RHEA:23445"/>
    </physiologicalReaction>
    <physiologicalReaction direction="right-to-left" evidence="2">
        <dbReference type="Rhea" id="RHEA:23446"/>
    </physiologicalReaction>
</comment>
<comment type="pathway">
    <text evidence="2">Fermentation; pyruvate fermentation to lactate; (S)-lactate from pyruvate: step 1/1.</text>
</comment>
<comment type="subunit">
    <text evidence="1">Homotetramer.</text>
</comment>
<comment type="subcellular location">
    <subcellularLocation>
        <location evidence="1">Cytoplasm</location>
    </subcellularLocation>
</comment>
<comment type="similarity">
    <text evidence="3">Belongs to the LDH/MDH superfamily. LDH family.</text>
</comment>
<reference key="1">
    <citation type="journal article" date="1998" name="Proc. Natl. Acad. Sci. U.S.A.">
        <title>Hot spots in cold adaptation: localized increases in conformational flexibility in lactate dehydrogenase A4 orthologs of Antarctic notothenioid fishes.</title>
        <authorList>
            <person name="Fields P.A."/>
            <person name="Somero G.N."/>
        </authorList>
    </citation>
    <scope>NUCLEOTIDE SEQUENCE [MRNA]</scope>
    <source>
        <tissue>Muscle</tissue>
    </source>
</reference>
<dbReference type="EC" id="1.1.1.27" evidence="2"/>
<dbReference type="EMBL" id="AF079830">
    <property type="protein sequence ID" value="AAC63288.1"/>
    <property type="molecule type" value="mRNA"/>
</dbReference>
<dbReference type="SMR" id="O93546"/>
<dbReference type="UniPathway" id="UPA00554">
    <property type="reaction ID" value="UER00611"/>
</dbReference>
<dbReference type="GO" id="GO:0005737">
    <property type="term" value="C:cytoplasm"/>
    <property type="evidence" value="ECO:0007669"/>
    <property type="project" value="UniProtKB-SubCell"/>
</dbReference>
<dbReference type="GO" id="GO:0004459">
    <property type="term" value="F:L-lactate dehydrogenase activity"/>
    <property type="evidence" value="ECO:0007669"/>
    <property type="project" value="UniProtKB-EC"/>
</dbReference>
<dbReference type="GO" id="GO:0006089">
    <property type="term" value="P:lactate metabolic process"/>
    <property type="evidence" value="ECO:0007669"/>
    <property type="project" value="TreeGrafter"/>
</dbReference>
<dbReference type="CDD" id="cd05293">
    <property type="entry name" value="LDH_1"/>
    <property type="match status" value="1"/>
</dbReference>
<dbReference type="FunFam" id="3.40.50.720:FF:000029">
    <property type="entry name" value="L-lactate dehydrogenase A chain"/>
    <property type="match status" value="1"/>
</dbReference>
<dbReference type="FunFam" id="3.90.110.10:FF:000003">
    <property type="entry name" value="L-lactate dehydrogenase A chain"/>
    <property type="match status" value="1"/>
</dbReference>
<dbReference type="Gene3D" id="3.90.110.10">
    <property type="entry name" value="Lactate dehydrogenase/glycoside hydrolase, family 4, C-terminal"/>
    <property type="match status" value="1"/>
</dbReference>
<dbReference type="Gene3D" id="3.40.50.720">
    <property type="entry name" value="NAD(P)-binding Rossmann-like Domain"/>
    <property type="match status" value="1"/>
</dbReference>
<dbReference type="HAMAP" id="MF_00488">
    <property type="entry name" value="Lactate_dehydrog"/>
    <property type="match status" value="1"/>
</dbReference>
<dbReference type="InterPro" id="IPR001557">
    <property type="entry name" value="L-lactate/malate_DH"/>
</dbReference>
<dbReference type="InterPro" id="IPR011304">
    <property type="entry name" value="L-lactate_DH"/>
</dbReference>
<dbReference type="InterPro" id="IPR018177">
    <property type="entry name" value="L-lactate_DH_AS"/>
</dbReference>
<dbReference type="InterPro" id="IPR022383">
    <property type="entry name" value="Lactate/malate_DH_C"/>
</dbReference>
<dbReference type="InterPro" id="IPR001236">
    <property type="entry name" value="Lactate/malate_DH_N"/>
</dbReference>
<dbReference type="InterPro" id="IPR015955">
    <property type="entry name" value="Lactate_DH/Glyco_Ohase_4_C"/>
</dbReference>
<dbReference type="InterPro" id="IPR036291">
    <property type="entry name" value="NAD(P)-bd_dom_sf"/>
</dbReference>
<dbReference type="NCBIfam" id="TIGR01771">
    <property type="entry name" value="L-LDH-NAD"/>
    <property type="match status" value="1"/>
</dbReference>
<dbReference type="PANTHER" id="PTHR43128">
    <property type="entry name" value="L-2-HYDROXYCARBOXYLATE DEHYDROGENASE (NAD(P)(+))"/>
    <property type="match status" value="1"/>
</dbReference>
<dbReference type="PANTHER" id="PTHR43128:SF10">
    <property type="entry name" value="L-LACTATE DEHYDROGENASE A CHAIN"/>
    <property type="match status" value="1"/>
</dbReference>
<dbReference type="Pfam" id="PF02866">
    <property type="entry name" value="Ldh_1_C"/>
    <property type="match status" value="1"/>
</dbReference>
<dbReference type="Pfam" id="PF00056">
    <property type="entry name" value="Ldh_1_N"/>
    <property type="match status" value="1"/>
</dbReference>
<dbReference type="PIRSF" id="PIRSF000102">
    <property type="entry name" value="Lac_mal_DH"/>
    <property type="match status" value="1"/>
</dbReference>
<dbReference type="PRINTS" id="PR00086">
    <property type="entry name" value="LLDHDRGNASE"/>
</dbReference>
<dbReference type="SUPFAM" id="SSF56327">
    <property type="entry name" value="LDH C-terminal domain-like"/>
    <property type="match status" value="1"/>
</dbReference>
<dbReference type="SUPFAM" id="SSF51735">
    <property type="entry name" value="NAD(P)-binding Rossmann-fold domains"/>
    <property type="match status" value="1"/>
</dbReference>
<dbReference type="PROSITE" id="PS00064">
    <property type="entry name" value="L_LDH"/>
    <property type="match status" value="1"/>
</dbReference>
<proteinExistence type="evidence at transcript level"/>
<sequence>MSTKEKLISHVMKEEPVGSRSKVTVVGVGMVGMASAISILLKDLCDELAMVDVMEDKLKGEVMDLQHGSLFLKTKIVGDKDYSVTANSKVVVVTAGARQQEGESRLNLVQRNVNIFKFIIPNIVKYSPNCILMVVSNPVDILTYVAWKLSGFPRHRVIGSGTNLDSARFRHLIGEKLHLHPSSCHAWIVGEHGDSSVPVWSGVNVAGVSLQGLNPQMGTEGDGENWKAIHKEVVDGAYEVIKLKGYTSWAIGMSVADLVESIIKNMHKVHPVSTLVQGMHGVKDEVFLSVPCVLGNSGLTDVIHMTLKAEEEKQVQKSAETLWGVQKELTL</sequence>
<protein>
    <recommendedName>
        <fullName>L-lactate dehydrogenase A chain</fullName>
        <shortName>LDH-A</shortName>
        <ecNumber evidence="2">1.1.1.27</ecNumber>
    </recommendedName>
</protein>
<gene>
    <name type="primary">ldha</name>
</gene>
<evidence type="ECO:0000250" key="1"/>
<evidence type="ECO:0000250" key="2">
    <source>
        <dbReference type="UniProtKB" id="P00338"/>
    </source>
</evidence>
<evidence type="ECO:0000305" key="3"/>
<organism>
    <name type="scientific">Patagonotothen tessellata</name>
    <name type="common">Black southern cod</name>
    <dbReference type="NCBI Taxonomy" id="83205"/>
    <lineage>
        <taxon>Eukaryota</taxon>
        <taxon>Metazoa</taxon>
        <taxon>Chordata</taxon>
        <taxon>Craniata</taxon>
        <taxon>Vertebrata</taxon>
        <taxon>Euteleostomi</taxon>
        <taxon>Actinopterygii</taxon>
        <taxon>Neopterygii</taxon>
        <taxon>Teleostei</taxon>
        <taxon>Neoteleostei</taxon>
        <taxon>Acanthomorphata</taxon>
        <taxon>Eupercaria</taxon>
        <taxon>Perciformes</taxon>
        <taxon>Notothenioidei</taxon>
        <taxon>Nototheniidae</taxon>
        <taxon>Patagonotothen</taxon>
    </lineage>
</organism>
<keyword id="KW-0963">Cytoplasm</keyword>
<keyword id="KW-0520">NAD</keyword>
<keyword id="KW-0560">Oxidoreductase</keyword>
<name>LDHA_PATTE</name>
<accession>O93546</accession>